<name>CDR_STAAS</name>
<keyword id="KW-0274">FAD</keyword>
<keyword id="KW-0285">Flavoprotein</keyword>
<keyword id="KW-0521">NADP</keyword>
<keyword id="KW-0560">Oxidoreductase</keyword>
<keyword id="KW-0676">Redox-active center</keyword>
<accession>Q6GAV6</accession>
<sequence>MPKIVVVGAVAGGATCASQIRRLDKESDIIIFEKDRDMSFANCALPYVIGEVVEDRKYALAYTPEKFYDRKQITVKTYHEVIAINDERQTVTVLNRKTNEQFEESYDKLILSPGASANSLGFESDITFTLRNLEDTDAIDQFIKANQVDKVLVVGAGYVSLEVLENLYERGLHPTLIHRSDKINKLMDADMNQPILDELDKREIPYRLNEEIDAINGNEITFKSGKVEHYDMIIEGVGTHPNSKFIESSNIKLDRKGFIPVNDKFETNVPNIYAIGDIATSHYRHVDLPASVPLAWGAHRAASIVAEQIAGNDTIEFKGFLGNNIVKFFDYTFASVGVKPNELKQFDYKMVEVTQGAHANYYPGNSPLHLRVYYDTSNRQILRAAAVGKEGADKRIDVLSMAMMNQLTVDELTEFEVAYAPPYSHPKDLINMIGYKAK</sequence>
<evidence type="ECO:0000250" key="1"/>
<evidence type="ECO:0000255" key="2">
    <source>
        <dbReference type="HAMAP-Rule" id="MF_01608"/>
    </source>
</evidence>
<organism>
    <name type="scientific">Staphylococcus aureus (strain MSSA476)</name>
    <dbReference type="NCBI Taxonomy" id="282459"/>
    <lineage>
        <taxon>Bacteria</taxon>
        <taxon>Bacillati</taxon>
        <taxon>Bacillota</taxon>
        <taxon>Bacilli</taxon>
        <taxon>Bacillales</taxon>
        <taxon>Staphylococcaceae</taxon>
        <taxon>Staphylococcus</taxon>
    </lineage>
</organism>
<gene>
    <name evidence="2" type="primary">cdr</name>
    <name type="ordered locus">SAS0840</name>
</gene>
<comment type="function">
    <text evidence="2">Catalyzes specifically the NADPH-dependent reduction of coenzyme A disulfide.</text>
</comment>
<comment type="catalytic activity">
    <reaction evidence="2">
        <text>NADP(+) + 2 CoA = CoA-disulfide + NADPH + H(+)</text>
        <dbReference type="Rhea" id="RHEA:14705"/>
        <dbReference type="ChEBI" id="CHEBI:15378"/>
        <dbReference type="ChEBI" id="CHEBI:57287"/>
        <dbReference type="ChEBI" id="CHEBI:57783"/>
        <dbReference type="ChEBI" id="CHEBI:58349"/>
        <dbReference type="ChEBI" id="CHEBI:62209"/>
        <dbReference type="EC" id="1.8.1.14"/>
    </reaction>
</comment>
<comment type="cofactor">
    <cofactor evidence="2">
        <name>FAD</name>
        <dbReference type="ChEBI" id="CHEBI:57692"/>
    </cofactor>
    <text evidence="2">Binds 1 FAD per subunit.</text>
</comment>
<comment type="subunit">
    <text evidence="2">Homodimer.</text>
</comment>
<comment type="domain">
    <text evidence="2">Contains 2 FAD binding domains and a single NADPH binding domain.</text>
</comment>
<comment type="miscellaneous">
    <text evidence="2">Reduction of disulfides occurs by a thiol-disulfide exchange reaction, but involves only a single catalytic cysteine residue that forms a stable mixed disulfide with CoA during catalysis.</text>
</comment>
<comment type="similarity">
    <text evidence="2">Belongs to the class-III pyridine nucleotide-disulfide oxidoreductase family.</text>
</comment>
<feature type="initiator methionine" description="Removed" evidence="1">
    <location>
        <position position="1"/>
    </location>
</feature>
<feature type="chain" id="PRO_0000184693" description="Coenzyme A disulfide reductase">
    <location>
        <begin position="2"/>
        <end position="438"/>
    </location>
</feature>
<feature type="active site" description="Nucleophile" evidence="2">
    <location>
        <position position="43"/>
    </location>
</feature>
<feature type="active site" description="Redox-active" evidence="2">
    <location>
        <position position="43"/>
    </location>
</feature>
<feature type="binding site" evidence="2">
    <location>
        <begin position="8"/>
        <end position="33"/>
    </location>
    <ligand>
        <name>FAD</name>
        <dbReference type="ChEBI" id="CHEBI:57692"/>
    </ligand>
</feature>
<feature type="binding site" evidence="2">
    <location>
        <position position="15"/>
    </location>
    <ligand>
        <name>substrate</name>
    </ligand>
</feature>
<feature type="binding site" evidence="2">
    <location>
        <position position="19"/>
    </location>
    <ligand>
        <name>substrate</name>
    </ligand>
</feature>
<feature type="binding site" evidence="2">
    <location>
        <position position="22"/>
    </location>
    <ligand>
        <name>substrate</name>
    </ligand>
</feature>
<feature type="binding site" evidence="2">
    <location>
        <position position="39"/>
    </location>
    <ligand>
        <name>substrate</name>
    </ligand>
</feature>
<feature type="binding site" evidence="2">
    <location>
        <position position="42"/>
    </location>
    <ligand>
        <name>substrate</name>
    </ligand>
</feature>
<feature type="binding site" evidence="2">
    <location>
        <position position="71"/>
    </location>
    <ligand>
        <name>substrate</name>
    </ligand>
</feature>
<feature type="binding site" evidence="2">
    <location>
        <begin position="151"/>
        <end position="166"/>
    </location>
    <ligand>
        <name>NADP(+)</name>
        <dbReference type="ChEBI" id="CHEBI:58349"/>
    </ligand>
</feature>
<feature type="binding site" evidence="2">
    <location>
        <begin position="267"/>
        <end position="277"/>
    </location>
    <ligand>
        <name>FAD</name>
        <dbReference type="ChEBI" id="CHEBI:57692"/>
    </ligand>
</feature>
<feature type="binding site" evidence="2">
    <location>
        <position position="299"/>
    </location>
    <ligand>
        <name>substrate</name>
    </ligand>
</feature>
<feature type="binding site" evidence="2">
    <location>
        <position position="419"/>
    </location>
    <ligand>
        <name>FAD</name>
        <dbReference type="ChEBI" id="CHEBI:57692"/>
    </ligand>
</feature>
<feature type="binding site" evidence="2">
    <location>
        <position position="427"/>
    </location>
    <ligand>
        <name>substrate</name>
    </ligand>
</feature>
<proteinExistence type="inferred from homology"/>
<dbReference type="EC" id="1.8.1.14" evidence="2"/>
<dbReference type="EMBL" id="BX571857">
    <property type="protein sequence ID" value="CAG42615.1"/>
    <property type="molecule type" value="Genomic_DNA"/>
</dbReference>
<dbReference type="RefSeq" id="WP_001124511.1">
    <property type="nucleotide sequence ID" value="NC_002953.3"/>
</dbReference>
<dbReference type="SMR" id="Q6GAV6"/>
<dbReference type="KEGG" id="sas:SAS0840"/>
<dbReference type="HOGENOM" id="CLU_003291_1_3_9"/>
<dbReference type="GO" id="GO:0050451">
    <property type="term" value="F:CoA-disulfide reductase (NADPH) activity"/>
    <property type="evidence" value="ECO:0007669"/>
    <property type="project" value="UniProtKB-UniRule"/>
</dbReference>
<dbReference type="GO" id="GO:0050660">
    <property type="term" value="F:flavin adenine dinucleotide binding"/>
    <property type="evidence" value="ECO:0007669"/>
    <property type="project" value="UniProtKB-UniRule"/>
</dbReference>
<dbReference type="GO" id="GO:0050661">
    <property type="term" value="F:NADP binding"/>
    <property type="evidence" value="ECO:0007669"/>
    <property type="project" value="UniProtKB-UniRule"/>
</dbReference>
<dbReference type="GO" id="GO:0003756">
    <property type="term" value="F:protein disulfide isomerase activity"/>
    <property type="evidence" value="ECO:0007669"/>
    <property type="project" value="UniProtKB-UniRule"/>
</dbReference>
<dbReference type="Gene3D" id="3.30.390.30">
    <property type="match status" value="1"/>
</dbReference>
<dbReference type="Gene3D" id="3.50.50.60">
    <property type="entry name" value="FAD/NAD(P)-binding domain"/>
    <property type="match status" value="2"/>
</dbReference>
<dbReference type="HAMAP" id="MF_01608">
    <property type="entry name" value="CoA_diS_reduct"/>
    <property type="match status" value="1"/>
</dbReference>
<dbReference type="InterPro" id="IPR017758">
    <property type="entry name" value="CoA_disulphide_reductase"/>
</dbReference>
<dbReference type="InterPro" id="IPR023536">
    <property type="entry name" value="CoA_disulphide_reductase_staph"/>
</dbReference>
<dbReference type="InterPro" id="IPR050260">
    <property type="entry name" value="FAD-bd_OxRdtase"/>
</dbReference>
<dbReference type="InterPro" id="IPR036188">
    <property type="entry name" value="FAD/NAD-bd_sf"/>
</dbReference>
<dbReference type="InterPro" id="IPR023753">
    <property type="entry name" value="FAD/NAD-binding_dom"/>
</dbReference>
<dbReference type="InterPro" id="IPR016156">
    <property type="entry name" value="FAD/NAD-linked_Rdtase_dimer_sf"/>
</dbReference>
<dbReference type="InterPro" id="IPR004099">
    <property type="entry name" value="Pyr_nucl-diS_OxRdtase_dimer"/>
</dbReference>
<dbReference type="NCBIfam" id="TIGR03385">
    <property type="entry name" value="CoA_CoA_reduc"/>
    <property type="match status" value="1"/>
</dbReference>
<dbReference type="NCBIfam" id="NF010037">
    <property type="entry name" value="PRK13512.1"/>
    <property type="match status" value="1"/>
</dbReference>
<dbReference type="PANTHER" id="PTHR43429:SF1">
    <property type="entry name" value="NAD(P)H SULFUR OXIDOREDUCTASE (COA-DEPENDENT)"/>
    <property type="match status" value="1"/>
</dbReference>
<dbReference type="PANTHER" id="PTHR43429">
    <property type="entry name" value="PYRIDINE NUCLEOTIDE-DISULFIDE OXIDOREDUCTASE DOMAIN-CONTAINING"/>
    <property type="match status" value="1"/>
</dbReference>
<dbReference type="Pfam" id="PF07992">
    <property type="entry name" value="Pyr_redox_2"/>
    <property type="match status" value="1"/>
</dbReference>
<dbReference type="Pfam" id="PF02852">
    <property type="entry name" value="Pyr_redox_dim"/>
    <property type="match status" value="1"/>
</dbReference>
<dbReference type="PRINTS" id="PR00368">
    <property type="entry name" value="FADPNR"/>
</dbReference>
<dbReference type="PRINTS" id="PR00411">
    <property type="entry name" value="PNDRDTASEI"/>
</dbReference>
<dbReference type="SUPFAM" id="SSF51905">
    <property type="entry name" value="FAD/NAD(P)-binding domain"/>
    <property type="match status" value="1"/>
</dbReference>
<dbReference type="SUPFAM" id="SSF55424">
    <property type="entry name" value="FAD/NAD-linked reductases, dimerisation (C-terminal) domain"/>
    <property type="match status" value="1"/>
</dbReference>
<protein>
    <recommendedName>
        <fullName evidence="2">Coenzyme A disulfide reductase</fullName>
        <shortName evidence="2">CoA-disulfide reductase</shortName>
        <shortName evidence="2">CoADR</shortName>
        <ecNumber evidence="2">1.8.1.14</ecNumber>
    </recommendedName>
</protein>
<reference key="1">
    <citation type="journal article" date="2004" name="Proc. Natl. Acad. Sci. U.S.A.">
        <title>Complete genomes of two clinical Staphylococcus aureus strains: evidence for the rapid evolution of virulence and drug resistance.</title>
        <authorList>
            <person name="Holden M.T.G."/>
            <person name="Feil E.J."/>
            <person name="Lindsay J.A."/>
            <person name="Peacock S.J."/>
            <person name="Day N.P.J."/>
            <person name="Enright M.C."/>
            <person name="Foster T.J."/>
            <person name="Moore C.E."/>
            <person name="Hurst L."/>
            <person name="Atkin R."/>
            <person name="Barron A."/>
            <person name="Bason N."/>
            <person name="Bentley S.D."/>
            <person name="Chillingworth C."/>
            <person name="Chillingworth T."/>
            <person name="Churcher C."/>
            <person name="Clark L."/>
            <person name="Corton C."/>
            <person name="Cronin A."/>
            <person name="Doggett J."/>
            <person name="Dowd L."/>
            <person name="Feltwell T."/>
            <person name="Hance Z."/>
            <person name="Harris B."/>
            <person name="Hauser H."/>
            <person name="Holroyd S."/>
            <person name="Jagels K."/>
            <person name="James K.D."/>
            <person name="Lennard N."/>
            <person name="Line A."/>
            <person name="Mayes R."/>
            <person name="Moule S."/>
            <person name="Mungall K."/>
            <person name="Ormond D."/>
            <person name="Quail M.A."/>
            <person name="Rabbinowitsch E."/>
            <person name="Rutherford K.M."/>
            <person name="Sanders M."/>
            <person name="Sharp S."/>
            <person name="Simmonds M."/>
            <person name="Stevens K."/>
            <person name="Whitehead S."/>
            <person name="Barrell B.G."/>
            <person name="Spratt B.G."/>
            <person name="Parkhill J."/>
        </authorList>
    </citation>
    <scope>NUCLEOTIDE SEQUENCE [LARGE SCALE GENOMIC DNA]</scope>
    <source>
        <strain>MSSA476</strain>
    </source>
</reference>